<accession>B7N9P5</accession>
<comment type="function">
    <text evidence="1">Catalyzes the reversible adenylation of nicotinate mononucleotide (NaMN) to nicotinic acid adenine dinucleotide (NaAD).</text>
</comment>
<comment type="catalytic activity">
    <reaction evidence="1">
        <text>nicotinate beta-D-ribonucleotide + ATP + H(+) = deamido-NAD(+) + diphosphate</text>
        <dbReference type="Rhea" id="RHEA:22860"/>
        <dbReference type="ChEBI" id="CHEBI:15378"/>
        <dbReference type="ChEBI" id="CHEBI:30616"/>
        <dbReference type="ChEBI" id="CHEBI:33019"/>
        <dbReference type="ChEBI" id="CHEBI:57502"/>
        <dbReference type="ChEBI" id="CHEBI:58437"/>
        <dbReference type="EC" id="2.7.7.18"/>
    </reaction>
</comment>
<comment type="pathway">
    <text evidence="1">Cofactor biosynthesis; NAD(+) biosynthesis; deamido-NAD(+) from nicotinate D-ribonucleotide: step 1/1.</text>
</comment>
<comment type="similarity">
    <text evidence="1">Belongs to the NadD family.</text>
</comment>
<keyword id="KW-0067">ATP-binding</keyword>
<keyword id="KW-0520">NAD</keyword>
<keyword id="KW-0547">Nucleotide-binding</keyword>
<keyword id="KW-0548">Nucleotidyltransferase</keyword>
<keyword id="KW-0662">Pyridine nucleotide biosynthesis</keyword>
<keyword id="KW-0808">Transferase</keyword>
<organism>
    <name type="scientific">Escherichia coli O17:K52:H18 (strain UMN026 / ExPEC)</name>
    <dbReference type="NCBI Taxonomy" id="585056"/>
    <lineage>
        <taxon>Bacteria</taxon>
        <taxon>Pseudomonadati</taxon>
        <taxon>Pseudomonadota</taxon>
        <taxon>Gammaproteobacteria</taxon>
        <taxon>Enterobacterales</taxon>
        <taxon>Enterobacteriaceae</taxon>
        <taxon>Escherichia</taxon>
    </lineage>
</organism>
<reference key="1">
    <citation type="journal article" date="2009" name="PLoS Genet.">
        <title>Organised genome dynamics in the Escherichia coli species results in highly diverse adaptive paths.</title>
        <authorList>
            <person name="Touchon M."/>
            <person name="Hoede C."/>
            <person name="Tenaillon O."/>
            <person name="Barbe V."/>
            <person name="Baeriswyl S."/>
            <person name="Bidet P."/>
            <person name="Bingen E."/>
            <person name="Bonacorsi S."/>
            <person name="Bouchier C."/>
            <person name="Bouvet O."/>
            <person name="Calteau A."/>
            <person name="Chiapello H."/>
            <person name="Clermont O."/>
            <person name="Cruveiller S."/>
            <person name="Danchin A."/>
            <person name="Diard M."/>
            <person name="Dossat C."/>
            <person name="Karoui M.E."/>
            <person name="Frapy E."/>
            <person name="Garry L."/>
            <person name="Ghigo J.M."/>
            <person name="Gilles A.M."/>
            <person name="Johnson J."/>
            <person name="Le Bouguenec C."/>
            <person name="Lescat M."/>
            <person name="Mangenot S."/>
            <person name="Martinez-Jehanne V."/>
            <person name="Matic I."/>
            <person name="Nassif X."/>
            <person name="Oztas S."/>
            <person name="Petit M.A."/>
            <person name="Pichon C."/>
            <person name="Rouy Z."/>
            <person name="Ruf C.S."/>
            <person name="Schneider D."/>
            <person name="Tourret J."/>
            <person name="Vacherie B."/>
            <person name="Vallenet D."/>
            <person name="Medigue C."/>
            <person name="Rocha E.P.C."/>
            <person name="Denamur E."/>
        </authorList>
    </citation>
    <scope>NUCLEOTIDE SEQUENCE [LARGE SCALE GENOMIC DNA]</scope>
    <source>
        <strain>UMN026 / ExPEC</strain>
    </source>
</reference>
<dbReference type="EC" id="2.7.7.18" evidence="1"/>
<dbReference type="EMBL" id="CU928163">
    <property type="protein sequence ID" value="CAR11946.1"/>
    <property type="molecule type" value="Genomic_DNA"/>
</dbReference>
<dbReference type="RefSeq" id="WP_000838894.1">
    <property type="nucleotide sequence ID" value="NC_011751.1"/>
</dbReference>
<dbReference type="RefSeq" id="YP_002411492.1">
    <property type="nucleotide sequence ID" value="NC_011751.1"/>
</dbReference>
<dbReference type="SMR" id="B7N9P5"/>
<dbReference type="STRING" id="585056.ECUMN_0733"/>
<dbReference type="KEGG" id="eum:ECUMN_0733"/>
<dbReference type="PATRIC" id="fig|585056.7.peg.931"/>
<dbReference type="HOGENOM" id="CLU_069765_0_0_6"/>
<dbReference type="UniPathway" id="UPA00253">
    <property type="reaction ID" value="UER00332"/>
</dbReference>
<dbReference type="Proteomes" id="UP000007097">
    <property type="component" value="Chromosome"/>
</dbReference>
<dbReference type="GO" id="GO:0005524">
    <property type="term" value="F:ATP binding"/>
    <property type="evidence" value="ECO:0007669"/>
    <property type="project" value="UniProtKB-KW"/>
</dbReference>
<dbReference type="GO" id="GO:0004515">
    <property type="term" value="F:nicotinate-nucleotide adenylyltransferase activity"/>
    <property type="evidence" value="ECO:0007669"/>
    <property type="project" value="UniProtKB-UniRule"/>
</dbReference>
<dbReference type="GO" id="GO:0009435">
    <property type="term" value="P:NAD biosynthetic process"/>
    <property type="evidence" value="ECO:0007669"/>
    <property type="project" value="UniProtKB-UniRule"/>
</dbReference>
<dbReference type="CDD" id="cd02165">
    <property type="entry name" value="NMNAT"/>
    <property type="match status" value="1"/>
</dbReference>
<dbReference type="FunFam" id="3.40.50.620:FF:000039">
    <property type="entry name" value="Probable nicotinate-nucleotide adenylyltransferase"/>
    <property type="match status" value="1"/>
</dbReference>
<dbReference type="Gene3D" id="3.40.50.620">
    <property type="entry name" value="HUPs"/>
    <property type="match status" value="1"/>
</dbReference>
<dbReference type="HAMAP" id="MF_00244">
    <property type="entry name" value="NaMN_adenylyltr"/>
    <property type="match status" value="1"/>
</dbReference>
<dbReference type="InterPro" id="IPR004821">
    <property type="entry name" value="Cyt_trans-like"/>
</dbReference>
<dbReference type="InterPro" id="IPR005248">
    <property type="entry name" value="NadD/NMNAT"/>
</dbReference>
<dbReference type="InterPro" id="IPR014729">
    <property type="entry name" value="Rossmann-like_a/b/a_fold"/>
</dbReference>
<dbReference type="NCBIfam" id="TIGR00125">
    <property type="entry name" value="cyt_tran_rel"/>
    <property type="match status" value="1"/>
</dbReference>
<dbReference type="NCBIfam" id="TIGR00482">
    <property type="entry name" value="nicotinate (nicotinamide) nucleotide adenylyltransferase"/>
    <property type="match status" value="1"/>
</dbReference>
<dbReference type="NCBIfam" id="NF000839">
    <property type="entry name" value="PRK00071.1-1"/>
    <property type="match status" value="1"/>
</dbReference>
<dbReference type="NCBIfam" id="NF000840">
    <property type="entry name" value="PRK00071.1-3"/>
    <property type="match status" value="1"/>
</dbReference>
<dbReference type="PANTHER" id="PTHR39321">
    <property type="entry name" value="NICOTINATE-NUCLEOTIDE ADENYLYLTRANSFERASE-RELATED"/>
    <property type="match status" value="1"/>
</dbReference>
<dbReference type="PANTHER" id="PTHR39321:SF3">
    <property type="entry name" value="PHOSPHOPANTETHEINE ADENYLYLTRANSFERASE"/>
    <property type="match status" value="1"/>
</dbReference>
<dbReference type="Pfam" id="PF01467">
    <property type="entry name" value="CTP_transf_like"/>
    <property type="match status" value="1"/>
</dbReference>
<dbReference type="SUPFAM" id="SSF52374">
    <property type="entry name" value="Nucleotidylyl transferase"/>
    <property type="match status" value="1"/>
</dbReference>
<proteinExistence type="inferred from homology"/>
<sequence>MKSLQALFGGTFDPVHYGHLKPVETLANLIGLTRVTIIPNNVPPHRPQPEANSVQRKHMLELAIADKPLFTLDERELKRNAPSYTAQTLKEWRQEQWPDVPLAFIIGQDSLLTFPTWYEYETILDNAHLIVCRRPGYPLEMAQPQYQQWLEDHLTHNPEDLHLQPAGKIYLAETPWFNISATIIRERLQNGESCEDLLPEPVLTYINQQGLYR</sequence>
<protein>
    <recommendedName>
        <fullName evidence="1">Probable nicotinate-nucleotide adenylyltransferase</fullName>
        <ecNumber evidence="1">2.7.7.18</ecNumber>
    </recommendedName>
    <alternativeName>
        <fullName evidence="1">Deamido-NAD(+) diphosphorylase</fullName>
    </alternativeName>
    <alternativeName>
        <fullName evidence="1">Deamido-NAD(+) pyrophosphorylase</fullName>
    </alternativeName>
    <alternativeName>
        <fullName evidence="1">Nicotinate mononucleotide adenylyltransferase</fullName>
        <shortName evidence="1">NaMN adenylyltransferase</shortName>
    </alternativeName>
</protein>
<evidence type="ECO:0000255" key="1">
    <source>
        <dbReference type="HAMAP-Rule" id="MF_00244"/>
    </source>
</evidence>
<name>NADD_ECOLU</name>
<gene>
    <name evidence="1" type="primary">nadD</name>
    <name type="ordered locus">ECUMN_0733</name>
</gene>
<feature type="chain" id="PRO_1000192234" description="Probable nicotinate-nucleotide adenylyltransferase">
    <location>
        <begin position="1"/>
        <end position="213"/>
    </location>
</feature>